<accession>A9FH21</accession>
<protein>
    <recommendedName>
        <fullName evidence="3">Ferredoxin Fdx2</fullName>
    </recommendedName>
</protein>
<dbReference type="EMBL" id="AM746676">
    <property type="protein sequence ID" value="CAN98175.1"/>
    <property type="molecule type" value="Genomic_DNA"/>
</dbReference>
<dbReference type="SMR" id="A9FH21"/>
<dbReference type="STRING" id="448385.sce8005"/>
<dbReference type="KEGG" id="scl:sce8005"/>
<dbReference type="eggNOG" id="COG1145">
    <property type="taxonomic scope" value="Bacteria"/>
</dbReference>
<dbReference type="HOGENOM" id="CLU_139698_11_0_7"/>
<dbReference type="OrthoDB" id="9803397at2"/>
<dbReference type="BioCyc" id="SCEL448385:SCE_RS40990-MONOMER"/>
<dbReference type="Proteomes" id="UP000002139">
    <property type="component" value="Chromosome"/>
</dbReference>
<dbReference type="GO" id="GO:0051539">
    <property type="term" value="F:4 iron, 4 sulfur cluster binding"/>
    <property type="evidence" value="ECO:0007669"/>
    <property type="project" value="UniProtKB-KW"/>
</dbReference>
<dbReference type="GO" id="GO:0046872">
    <property type="term" value="F:metal ion binding"/>
    <property type="evidence" value="ECO:0007669"/>
    <property type="project" value="UniProtKB-KW"/>
</dbReference>
<dbReference type="FunFam" id="3.30.70.20:FF:000045">
    <property type="entry name" value="Ferredoxin, 4Fe-4S"/>
    <property type="match status" value="1"/>
</dbReference>
<dbReference type="Gene3D" id="3.30.70.20">
    <property type="match status" value="1"/>
</dbReference>
<dbReference type="InterPro" id="IPR017896">
    <property type="entry name" value="4Fe4S_Fe-S-bd"/>
</dbReference>
<dbReference type="InterPro" id="IPR017900">
    <property type="entry name" value="4Fe4S_Fe_S_CS"/>
</dbReference>
<dbReference type="InterPro" id="IPR047927">
    <property type="entry name" value="YfhL-like"/>
</dbReference>
<dbReference type="NCBIfam" id="NF033683">
    <property type="entry name" value="di_4Fe-4S_YfhL"/>
    <property type="match status" value="1"/>
</dbReference>
<dbReference type="Pfam" id="PF00037">
    <property type="entry name" value="Fer4"/>
    <property type="match status" value="1"/>
</dbReference>
<dbReference type="SUPFAM" id="SSF54862">
    <property type="entry name" value="4Fe-4S ferredoxins"/>
    <property type="match status" value="1"/>
</dbReference>
<dbReference type="PROSITE" id="PS00198">
    <property type="entry name" value="4FE4S_FER_1"/>
    <property type="match status" value="1"/>
</dbReference>
<dbReference type="PROSITE" id="PS51379">
    <property type="entry name" value="4FE4S_FER_2"/>
    <property type="match status" value="1"/>
</dbReference>
<feature type="chain" id="PRO_0000459770" description="Ferredoxin Fdx2">
    <location>
        <begin position="1"/>
        <end position="101"/>
    </location>
</feature>
<feature type="domain" description="4Fe-4S ferredoxin-type 1" evidence="1">
    <location>
        <begin position="1"/>
        <end position="29"/>
    </location>
</feature>
<feature type="domain" description="4Fe-4S ferredoxin-type 2" evidence="1">
    <location>
        <begin position="31"/>
        <end position="64"/>
    </location>
</feature>
<feature type="binding site" evidence="1">
    <location>
        <position position="9"/>
    </location>
    <ligand>
        <name>[4Fe-4S] cluster</name>
        <dbReference type="ChEBI" id="CHEBI:49883"/>
        <label>1</label>
    </ligand>
</feature>
<feature type="binding site" evidence="1">
    <location>
        <position position="12"/>
    </location>
    <ligand>
        <name>[4Fe-4S] cluster</name>
        <dbReference type="ChEBI" id="CHEBI:49883"/>
        <label>1</label>
    </ligand>
</feature>
<feature type="binding site" evidence="1">
    <location>
        <position position="15"/>
    </location>
    <ligand>
        <name>[4Fe-4S] cluster</name>
        <dbReference type="ChEBI" id="CHEBI:49883"/>
        <label>1</label>
    </ligand>
</feature>
<feature type="binding site" evidence="1">
    <location>
        <position position="19"/>
    </location>
    <ligand>
        <name>[4Fe-4S] cluster</name>
        <dbReference type="ChEBI" id="CHEBI:49883"/>
        <label>2</label>
    </ligand>
</feature>
<feature type="binding site" evidence="1">
    <location>
        <position position="38"/>
    </location>
    <ligand>
        <name>[4Fe-4S] cluster</name>
        <dbReference type="ChEBI" id="CHEBI:49883"/>
        <label>2</label>
    </ligand>
</feature>
<feature type="binding site" evidence="1">
    <location>
        <position position="41"/>
    </location>
    <ligand>
        <name>[4Fe-4S] cluster</name>
        <dbReference type="ChEBI" id="CHEBI:49883"/>
        <label>2</label>
    </ligand>
</feature>
<feature type="binding site" evidence="1">
    <location>
        <position position="50"/>
    </location>
    <ligand>
        <name>[4Fe-4S] cluster</name>
        <dbReference type="ChEBI" id="CHEBI:49883"/>
        <label>2</label>
    </ligand>
</feature>
<feature type="binding site" evidence="1">
    <location>
        <position position="54"/>
    </location>
    <ligand>
        <name>[4Fe-4S] cluster</name>
        <dbReference type="ChEBI" id="CHEBI:49883"/>
        <label>1</label>
    </ligand>
</feature>
<reference key="1">
    <citation type="journal article" date="2007" name="Nat. Biotechnol.">
        <title>Complete genome sequence of the myxobacterium Sorangium cellulosum.</title>
        <authorList>
            <person name="Schneiker S."/>
            <person name="Perlova O."/>
            <person name="Kaiser O."/>
            <person name="Gerth K."/>
            <person name="Alici A."/>
            <person name="Altmeyer M.O."/>
            <person name="Bartels D."/>
            <person name="Bekel T."/>
            <person name="Beyer S."/>
            <person name="Bode E."/>
            <person name="Bode H.B."/>
            <person name="Bolten C.J."/>
            <person name="Choudhuri J.V."/>
            <person name="Doss S."/>
            <person name="Elnakady Y.A."/>
            <person name="Frank B."/>
            <person name="Gaigalat L."/>
            <person name="Goesmann A."/>
            <person name="Groeger C."/>
            <person name="Gross F."/>
            <person name="Jelsbak L."/>
            <person name="Jelsbak L."/>
            <person name="Kalinowski J."/>
            <person name="Kegler C."/>
            <person name="Knauber T."/>
            <person name="Konietzny S."/>
            <person name="Kopp M."/>
            <person name="Krause L."/>
            <person name="Krug D."/>
            <person name="Linke B."/>
            <person name="Mahmud T."/>
            <person name="Martinez-Arias R."/>
            <person name="McHardy A.C."/>
            <person name="Merai M."/>
            <person name="Meyer F."/>
            <person name="Mormann S."/>
            <person name="Munoz-Dorado J."/>
            <person name="Perez J."/>
            <person name="Pradella S."/>
            <person name="Rachid S."/>
            <person name="Raddatz G."/>
            <person name="Rosenau F."/>
            <person name="Rueckert C."/>
            <person name="Sasse F."/>
            <person name="Scharfe M."/>
            <person name="Schuster S.C."/>
            <person name="Suen G."/>
            <person name="Treuner-Lange A."/>
            <person name="Velicer G.J."/>
            <person name="Vorholter F.-J."/>
            <person name="Weissman K.J."/>
            <person name="Welch R.D."/>
            <person name="Wenzel S.C."/>
            <person name="Whitworth D.E."/>
            <person name="Wilhelm S."/>
            <person name="Wittmann C."/>
            <person name="Bloecker H."/>
            <person name="Puehler A."/>
            <person name="Mueller R."/>
        </authorList>
    </citation>
    <scope>NUCLEOTIDE SEQUENCE [LARGE SCALE GENOMIC DNA]</scope>
    <source>
        <strain>So ce56</strain>
    </source>
</reference>
<reference key="2">
    <citation type="journal article" date="2009" name="J. Biol. Chem.">
        <title>Genome mining in Sorangium cellulosum So ce56: identification and characterization of the homologous electron transfer proteins of a myxobacterial cytochrome P450.</title>
        <authorList>
            <person name="Ewen K.M."/>
            <person name="Hannemann F."/>
            <person name="Khatri Y."/>
            <person name="Perlova O."/>
            <person name="Kappl R."/>
            <person name="Krug D."/>
            <person name="Huettermann J."/>
            <person name="Mueller R."/>
            <person name="Bernhardt R."/>
        </authorList>
    </citation>
    <scope>FUNCTION AS AN ELECTRON TRANSFER PROTEIN</scope>
    <source>
        <strain>So ce56</strain>
    </source>
</reference>
<name>FDX2_SORC5</name>
<comment type="function">
    <text evidence="2">Ferredoxins are iron-sulfur proteins that transfer electrons in a wide variety of metabolic reactions (PubMed:19696019). Fdx2 can receive electrons from both FdR_A and FdR_B ferredoxin reductases, with a preference for FdR_B compared with FdR_A, and transfer the electrons to the cytochrome P450 CYP260A1 (PubMed:19696019).</text>
</comment>
<comment type="cofactor">
    <cofactor evidence="1">
        <name>[4Fe-4S] cluster</name>
        <dbReference type="ChEBI" id="CHEBI:49883"/>
    </cofactor>
    <text evidence="1">Binds 2 [4Fe-4S] clusters.</text>
</comment>
<evidence type="ECO:0000255" key="1">
    <source>
        <dbReference type="PROSITE-ProRule" id="PRU00711"/>
    </source>
</evidence>
<evidence type="ECO:0000269" key="2">
    <source>
    </source>
</evidence>
<evidence type="ECO:0000303" key="3">
    <source>
    </source>
</evidence>
<evidence type="ECO:0000312" key="4">
    <source>
        <dbReference type="EMBL" id="CAN98175.1"/>
    </source>
</evidence>
<sequence length="101" mass="11240">MATYITEDCINCGACEPECPNEAISEGDEIYVIDPELCTECVGFYDHEACQAVCPVECCLPNPQIVETEEVLIARAVRLHPDDGELKKRAAANDYPSRFRK</sequence>
<proteinExistence type="evidence at protein level"/>
<keyword id="KW-0004">4Fe-4S</keyword>
<keyword id="KW-0249">Electron transport</keyword>
<keyword id="KW-0408">Iron</keyword>
<keyword id="KW-0411">Iron-sulfur</keyword>
<keyword id="KW-0479">Metal-binding</keyword>
<keyword id="KW-1185">Reference proteome</keyword>
<keyword id="KW-0813">Transport</keyword>
<gene>
    <name evidence="4" type="ordered locus">sce8005</name>
</gene>
<organism>
    <name type="scientific">Sorangium cellulosum (strain So ce56)</name>
    <name type="common">Polyangium cellulosum (strain So ce56)</name>
    <dbReference type="NCBI Taxonomy" id="448385"/>
    <lineage>
        <taxon>Bacteria</taxon>
        <taxon>Pseudomonadati</taxon>
        <taxon>Myxococcota</taxon>
        <taxon>Polyangia</taxon>
        <taxon>Polyangiales</taxon>
        <taxon>Polyangiaceae</taxon>
        <taxon>Sorangium</taxon>
    </lineage>
</organism>